<proteinExistence type="evidence at protein level"/>
<name>IF4E1_CUCME</name>
<sequence>MVVEDSMKATSAEDLSNSIANQNPRGRGGDEDEELEEGEIVGDDDLDSSNLSASLVHQPHPLEHSWTFWFDNPSAKSKQATWGASIRPIYTFSTVEEFWSVYNNIHHPSKLAMRADLYCFKHKIEPKWEDPVCANGGKWTVNFPRGKSDNGWLYTLLAMIGEQFDCGDEICGAVVNVRSGQDKISIWTKNASNEAAQASIGKQWKEFLDYNESIGFIFHDDAKKFDRHAKNKYMV</sequence>
<accession>P0DXI0</accession>
<accession>A0A5A7UUA1</accession>
<accession>Q00LS8</accession>
<accession>Q00LT0</accession>
<organism>
    <name type="scientific">Cucumis melo</name>
    <name type="common">Muskmelon</name>
    <dbReference type="NCBI Taxonomy" id="3656"/>
    <lineage>
        <taxon>Eukaryota</taxon>
        <taxon>Viridiplantae</taxon>
        <taxon>Streptophyta</taxon>
        <taxon>Embryophyta</taxon>
        <taxon>Tracheophyta</taxon>
        <taxon>Spermatophyta</taxon>
        <taxon>Magnoliopsida</taxon>
        <taxon>eudicotyledons</taxon>
        <taxon>Gunneridae</taxon>
        <taxon>Pentapetalae</taxon>
        <taxon>rosids</taxon>
        <taxon>fabids</taxon>
        <taxon>Cucurbitales</taxon>
        <taxon>Cucurbitaceae</taxon>
        <taxon>Benincaseae</taxon>
        <taxon>Cucumis</taxon>
    </lineage>
</organism>
<reference key="1">
    <citation type="journal article" date="2006" name="Plant J.">
        <title>An eIF4E allele confers resistance to an uncapped and non-polyadenylated RNA virus in melon.</title>
        <authorList>
            <person name="Nieto C."/>
            <person name="Morales M."/>
            <person name="Orjeda G."/>
            <person name="Clepet C."/>
            <person name="Monfort A."/>
            <person name="Sturbois B."/>
            <person name="Puigdomenech P."/>
            <person name="Pitrat M."/>
            <person name="Caboche M."/>
            <person name="Dogimont C."/>
            <person name="Garcia-Mas J."/>
            <person name="Aranda M.A."/>
            <person name="Bendahmane A."/>
        </authorList>
    </citation>
    <scope>NUCLEOTIDE SEQUENCE [MRNA]</scope>
    <scope>FUNCTION</scope>
    <scope>FUNCTION (MICROBIAL INFECTION)</scope>
    <scope>VARIANT LEU-228</scope>
    <scope>SUBUNIT (MICROBIAL INFECTION)</scope>
    <scope>POLYMORPHISM</scope>
    <source>
        <strain>cv. PI 161375</strain>
        <strain>cv. Vedrantais</strain>
        <strain>cv. WMR-29</strain>
    </source>
</reference>
<reference key="2">
    <citation type="journal article" date="2012" name="Proc. Natl. Acad. Sci. U.S.A.">
        <title>The genome of melon (Cucumis melo L.).</title>
        <authorList>
            <person name="Garcia-Mas J."/>
            <person name="Benjak A."/>
            <person name="Sanseverino W."/>
            <person name="Bourgeois M."/>
            <person name="Mir G."/>
            <person name="Gonzalez V.M."/>
            <person name="Henaff E."/>
            <person name="Camara F."/>
            <person name="Cozzuto L."/>
            <person name="Lowy E."/>
            <person name="Alioto T."/>
            <person name="Capella-Gutierrez S."/>
            <person name="Blanca J."/>
            <person name="Canizares J."/>
            <person name="Ziarsolo P."/>
            <person name="Gonzalez-Ibeas D."/>
            <person name="Rodriguez-Moreno L."/>
            <person name="Droege M."/>
            <person name="Du L."/>
            <person name="Alvarez-Tejado M."/>
            <person name="Lorente-Galdos B."/>
            <person name="Mele M."/>
            <person name="Yang L."/>
            <person name="Weng Y."/>
            <person name="Navarro A."/>
            <person name="Marques-Bonet T."/>
            <person name="Aranda M.A."/>
            <person name="Nuez F."/>
            <person name="Pico B."/>
            <person name="Gabaldon T."/>
            <person name="Roma G."/>
            <person name="Guigo R."/>
            <person name="Casacuberta J.M."/>
            <person name="Arus P."/>
            <person name="Puigdomenech P."/>
        </authorList>
    </citation>
    <scope>NUCLEOTIDE SEQUENCE [LARGE SCALE GENOMIC DNA]</scope>
    <source>
        <strain>cv. DHL92</strain>
    </source>
</reference>
<reference key="3">
    <citation type="journal article" date="2014" name="Infect. Genet. Evol.">
        <title>Evolution of plant eukaryotic initiation factor 4E (eIF4E) and potyvirus genome-linked protein (VPg): a game of mirrors impacting resistance spectrum and durability.</title>
        <authorList>
            <person name="Moury B."/>
            <person name="Charron C."/>
            <person name="Janzac B."/>
            <person name="Simon V."/>
            <person name="Gallois J.L."/>
            <person name="Palloix A."/>
            <person name="Caranta C."/>
        </authorList>
    </citation>
    <scope>GENE FAMILY</scope>
    <scope>REVIEW</scope>
</reference>
<reference key="4">
    <citation type="journal article" date="2017" name="Plant Physiol.">
        <title>Structure of eIF4E in Complex with an eIF4G Peptide Supports a Universal Bipartite Binding Mode for Protein Translation.</title>
        <authorList>
            <person name="Miras M."/>
            <person name="Truniger V."/>
            <person name="Silva C."/>
            <person name="Verdaguer N."/>
            <person name="Aranda M.A."/>
            <person name="Querol-Audi J."/>
        </authorList>
    </citation>
    <scope>X-RAY CRYSTALLOGRAPHY (1.90 ANGSTROMS) OF 2-235 IN COMPLEX WITH 7-METHYLGUANOSINE AND EIF4G</scope>
    <scope>FUNCTION</scope>
    <scope>DISULFIDE BONDS</scope>
    <scope>INTERACTION WITH EIF4G</scope>
    <scope>MUTAGENESIS OF PHE-70; ILE-89; TRP-99 AND TYR-154</scope>
    <scope>VARIANT LEU-228</scope>
    <source>
        <strain>cv. C46</strain>
    </source>
</reference>
<keyword id="KW-0002">3D-structure</keyword>
<keyword id="KW-0963">Cytoplasm</keyword>
<keyword id="KW-1015">Disulfide bond</keyword>
<keyword id="KW-0945">Host-virus interaction</keyword>
<keyword id="KW-0396">Initiation factor</keyword>
<keyword id="KW-0539">Nucleus</keyword>
<keyword id="KW-0611">Plant defense</keyword>
<keyword id="KW-0648">Protein biosynthesis</keyword>
<keyword id="KW-1185">Reference proteome</keyword>
<keyword id="KW-0694">RNA-binding</keyword>
<keyword id="KW-0810">Translation regulation</keyword>
<comment type="function">
    <text evidence="4 5">Component of the protein complex eIF4F, which is involved in the recognition of the mRNA cap, ATP-dependent unwinding of 5'-terminal secondary structure and recruitment of mRNA to the ribosome (PubMed:17026540, PubMed:28522457). Recognizes and binds the 7-methylguanosine-containing mRNA cap during an early step in the initiation of protein synthesis and facilitates ribosome binding by inducing the unwinding of the mRNAs secondary structures (PubMed:17026540, PubMed:28522457). Key component of recessive resistance to potyviruses and Tombusviridae genus Carmovirus such as melon necrotic spot virus (MNSV) (PubMed:17026540).</text>
</comment>
<comment type="function">
    <text evidence="4">(Microbial infection) Susceptibility host factor required for viral infection by recruiting viral RNAs, including uncapped and non-polyadenylated RNA, to the host ribosomal complex via an interaction with viral genome-linked protein (VPg).</text>
</comment>
<comment type="subunit">
    <text evidence="2 5">EIF4F is a multi-subunit complex, the composition of which varies with external and internal environmental conditions (By similarity). It is composed of at least EIF4A, EIF4E and EIF4G (By similarity). EIF4E is also known to interact with other partners (By similarity). Interacts directly with eIF4G (PubMed:28522457). In higher plants two isoforms of EIF4F have been identified, named isoform EIF4F and isoform EIF(iso)4F (By similarity). Isoform EIF4F has subunits p220 and p26, whereas isoform EIF(iso)4F has subunits p82 and p28 (By similarity).</text>
</comment>
<comment type="subunit">
    <text evidence="8">(Microbial infection) Interacts with potyvirus viral genome-linked protein (VPg); this interaction is possible in susceptible hosts but impaired in resistant plants.</text>
</comment>
<comment type="subcellular location">
    <subcellularLocation>
        <location evidence="1">Nucleus</location>
    </subcellularLocation>
    <subcellularLocation>
        <location evidence="1">Cytoplasm</location>
    </subcellularLocation>
</comment>
<comment type="PTM">
    <text evidence="2">According to the redox status, the Cys-133-Cys-171 disulfide bridge may have a role in regulating protein function by affecting its ability to bind capped mRNA.</text>
</comment>
<comment type="polymorphism">
    <text evidence="4">Variant present in the strain cv. PI 161375, allele nsv, confers an increased resistance to Tombusviridae genus Carmovirus such as melon necrotic spot virus (MNSV) strain Malpha5 but not to the strain 264, associated with a normal mRNA cap-binding activity, but an impaired ability to support cap-independent translation of mRNAs.</text>
</comment>
<comment type="miscellaneous">
    <text evidence="7">Displayed sequence is cv. WMR-29 and cv. Vedrantais.</text>
</comment>
<comment type="similarity">
    <text evidence="7">Belongs to the eukaryotic initiation factor 4E family.</text>
</comment>
<protein>
    <recommendedName>
        <fullName evidence="6">Eukaryotic translation initiation factor 4E-1</fullName>
        <shortName evidence="6">Cm-eIF4E</shortName>
        <shortName evidence="6">eIF-4E-1</shortName>
        <shortName evidence="6">eIF4E-1</shortName>
    </recommendedName>
    <alternativeName>
        <fullName evidence="7">eIF-4F 25 kDa subunit</fullName>
    </alternativeName>
    <alternativeName>
        <fullName evidence="7">eIF-4F p26 subunit</fullName>
    </alternativeName>
    <alternativeName>
        <fullName evidence="6">mRNA cap-binding protein</fullName>
    </alternativeName>
</protein>
<gene>
    <name evidence="6" type="primary">eIF4E</name>
</gene>
<evidence type="ECO:0000250" key="1">
    <source>
        <dbReference type="UniProtKB" id="C6ZJZ3"/>
    </source>
</evidence>
<evidence type="ECO:0000250" key="2">
    <source>
        <dbReference type="UniProtKB" id="P29557"/>
    </source>
</evidence>
<evidence type="ECO:0000256" key="3">
    <source>
        <dbReference type="SAM" id="MobiDB-lite"/>
    </source>
</evidence>
<evidence type="ECO:0000269" key="4">
    <source>
    </source>
</evidence>
<evidence type="ECO:0000269" key="5">
    <source>
    </source>
</evidence>
<evidence type="ECO:0000303" key="6">
    <source>
    </source>
</evidence>
<evidence type="ECO:0000305" key="7"/>
<evidence type="ECO:0000305" key="8">
    <source>
    </source>
</evidence>
<evidence type="ECO:0007744" key="9">
    <source>
        <dbReference type="PDB" id="5ME5"/>
    </source>
</evidence>
<evidence type="ECO:0007744" key="10">
    <source>
        <dbReference type="PDB" id="5ME6"/>
    </source>
</evidence>
<evidence type="ECO:0007829" key="11">
    <source>
        <dbReference type="PDB" id="5ME5"/>
    </source>
</evidence>
<evidence type="ECO:0007829" key="12">
    <source>
        <dbReference type="PDB" id="5ME6"/>
    </source>
</evidence>
<evidence type="ECO:0007829" key="13">
    <source>
        <dbReference type="PDB" id="5ME7"/>
    </source>
</evidence>
<feature type="chain" id="PRO_0000454068" description="Eukaryotic translation initiation factor 4E-1">
    <location>
        <begin position="1"/>
        <end position="235"/>
    </location>
</feature>
<feature type="region of interest" description="Disordered" evidence="3">
    <location>
        <begin position="1"/>
        <end position="52"/>
    </location>
</feature>
<feature type="region of interest" description="EIF4G-binding" evidence="5 9">
    <location>
        <begin position="60"/>
        <end position="63"/>
    </location>
</feature>
<feature type="region of interest" description="EIF4G-binding" evidence="5 9">
    <location>
        <begin position="70"/>
        <end position="106"/>
    </location>
</feature>
<feature type="region of interest" description="EIF4G-binding" evidence="5 9">
    <location>
        <begin position="154"/>
        <end position="163"/>
    </location>
</feature>
<feature type="compositionally biased region" description="Polar residues" evidence="3">
    <location>
        <begin position="13"/>
        <end position="24"/>
    </location>
</feature>
<feature type="compositionally biased region" description="Acidic residues" evidence="3">
    <location>
        <begin position="30"/>
        <end position="47"/>
    </location>
</feature>
<feature type="binding site" evidence="5 10">
    <location>
        <begin position="78"/>
        <end position="83"/>
    </location>
    <ligand>
        <name>mRNA</name>
        <dbReference type="ChEBI" id="CHEBI:33699"/>
    </ligand>
    <ligandPart>
        <name>N(7)-methylguanosine 5'-triphosphate group</name>
        <dbReference type="ChEBI" id="CHEBI:74429"/>
        <note>m7GTP residue in mRNA cap</note>
    </ligandPart>
</feature>
<feature type="binding site" evidence="2">
    <location>
        <position position="110"/>
    </location>
    <ligand>
        <name>mRNA</name>
        <dbReference type="ChEBI" id="CHEBI:33699"/>
    </ligand>
    <ligandPart>
        <name>N(7)-methylguanosine 5'-triphosphate group</name>
        <dbReference type="ChEBI" id="CHEBI:74429"/>
        <note>m7GTP residue in mRNA cap</note>
    </ligandPart>
</feature>
<feature type="binding site" evidence="5 10">
    <location>
        <begin position="128"/>
        <end position="129"/>
    </location>
    <ligand>
        <name>mRNA</name>
        <dbReference type="ChEBI" id="CHEBI:33699"/>
    </ligand>
    <ligandPart>
        <name>N(7)-methylguanosine 5'-triphosphate group</name>
        <dbReference type="ChEBI" id="CHEBI:74429"/>
        <note>m7GTP residue in mRNA cap</note>
    </ligandPart>
</feature>
<feature type="binding site" evidence="5 10">
    <location>
        <begin position="178"/>
        <end position="183"/>
    </location>
    <ligand>
        <name>mRNA</name>
        <dbReference type="ChEBI" id="CHEBI:33699"/>
    </ligand>
    <ligandPart>
        <name>N(7)-methylguanosine 5'-triphosphate group</name>
        <dbReference type="ChEBI" id="CHEBI:74429"/>
        <note>m7GTP residue in mRNA cap</note>
    </ligandPart>
</feature>
<feature type="binding site" evidence="5 10">
    <location>
        <begin position="223"/>
        <end position="227"/>
    </location>
    <ligand>
        <name>mRNA</name>
        <dbReference type="ChEBI" id="CHEBI:33699"/>
    </ligand>
    <ligandPart>
        <name>N(7)-methylguanosine 5'-triphosphate group</name>
        <dbReference type="ChEBI" id="CHEBI:74429"/>
        <note>m7GTP residue in mRNA cap</note>
    </ligandPart>
</feature>
<feature type="disulfide bond" evidence="5 9">
    <location>
        <begin position="133"/>
        <end position="171"/>
    </location>
</feature>
<feature type="sequence variant" description="In strain: PI 161375, allele nsv." evidence="4">
    <original>H</original>
    <variation>L</variation>
    <location>
        <position position="228"/>
    </location>
</feature>
<feature type="mutagenesis site" description="Reduced eIF4G binding and impaired ability to support cap-independent translation of mRNAs. Strongly reduced eIF4G binding and impaired ability to support cap-independent translation of mRNAs; when associated with A-89. Strongly reduced eIF4G binding and impaired ability to support cap-independent translation of mRNAs; when associated with A-99 and H-154. Strongly reduced eIF4G binding and impaired ability to support cap-independent translation of mRNAs; when associated with A-89 and H-154." evidence="5">
    <original>F</original>
    <variation>A</variation>
    <location>
        <position position="70"/>
    </location>
</feature>
<feature type="mutagenesis site" description="Strongly reduced eIF4G binding and impaired ability to support cap-independent translation of mRNAs; when associated with A-70. Strongly reduced eIF4G binding and impaired ability to support cap-independent translation of mRNAs; when associated with A-70 and H-154." evidence="5">
    <original>I</original>
    <variation>A</variation>
    <location>
        <position position="89"/>
    </location>
</feature>
<feature type="mutagenesis site" description="Reduced eIF4G binding and impaired ability to support cap-independent translation of mRNAs. Strongly reduced eIF4G binding and impaired ability to support cap-independent translation of mRNAs; when associated with H-154. Strongly reduced eIF4G binding and impaired ability to support cap-independent translation of mRNAs; when associated with A-70 and H-154." evidence="5">
    <original>W</original>
    <variation>A</variation>
    <location>
        <position position="99"/>
    </location>
</feature>
<feature type="mutagenesis site" description="Strongly reduced eIF4G binding and impaired ability to support cap-independent translation of mRNAs; when associated with A-99. Strongly reduced eIF4G binding and impaired ability to support cap-independent translation of mRNAs; when associated with A-70 and A-89. Strongly reduced eIF4G binding and impaired ability to support cap-independent translation of mRNAs; when associated with A-70 and A-99." evidence="5">
    <original>Y</original>
    <variation>H</variation>
    <location>
        <position position="154"/>
    </location>
</feature>
<feature type="helix" evidence="12">
    <location>
        <begin position="53"/>
        <end position="56"/>
    </location>
</feature>
<feature type="strand" evidence="11">
    <location>
        <begin position="61"/>
        <end position="71"/>
    </location>
</feature>
<feature type="strand" evidence="11">
    <location>
        <begin position="86"/>
        <end position="94"/>
    </location>
</feature>
<feature type="helix" evidence="11">
    <location>
        <begin position="95"/>
        <end position="102"/>
    </location>
</feature>
<feature type="helix" evidence="11">
    <location>
        <begin position="108"/>
        <end position="110"/>
    </location>
</feature>
<feature type="strand" evidence="11">
    <location>
        <begin position="116"/>
        <end position="121"/>
    </location>
</feature>
<feature type="helix" evidence="11">
    <location>
        <begin position="131"/>
        <end position="134"/>
    </location>
</feature>
<feature type="strand" evidence="11">
    <location>
        <begin position="136"/>
        <end position="144"/>
    </location>
</feature>
<feature type="helix" evidence="11">
    <location>
        <begin position="149"/>
        <end position="160"/>
    </location>
</feature>
<feature type="helix" evidence="11">
    <location>
        <begin position="167"/>
        <end position="169"/>
    </location>
</feature>
<feature type="strand" evidence="11">
    <location>
        <begin position="170"/>
        <end position="177"/>
    </location>
</feature>
<feature type="strand" evidence="11">
    <location>
        <begin position="179"/>
        <end position="189"/>
    </location>
</feature>
<feature type="helix" evidence="11">
    <location>
        <begin position="194"/>
        <end position="208"/>
    </location>
</feature>
<feature type="strand" evidence="11">
    <location>
        <begin position="214"/>
        <end position="218"/>
    </location>
</feature>
<feature type="helix" evidence="13">
    <location>
        <begin position="219"/>
        <end position="224"/>
    </location>
</feature>
<feature type="helix" evidence="12">
    <location>
        <begin position="226"/>
        <end position="228"/>
    </location>
</feature>
<feature type="strand" evidence="13">
    <location>
        <begin position="232"/>
        <end position="235"/>
    </location>
</feature>
<dbReference type="EMBL" id="DQ393830">
    <property type="protein sequence ID" value="ABD57969.1"/>
    <property type="molecule type" value="mRNA"/>
</dbReference>
<dbReference type="EMBL" id="DQ393831">
    <property type="protein sequence ID" value="ABD57970.1"/>
    <property type="molecule type" value="mRNA"/>
</dbReference>
<dbReference type="EMBL" id="DQ393832">
    <property type="protein sequence ID" value="ABD57971.1"/>
    <property type="molecule type" value="mRNA"/>
</dbReference>
<dbReference type="EMBL" id="EF188258">
    <property type="protein sequence ID" value="ABQ53636.1"/>
    <property type="molecule type" value="Genomic_DNA"/>
</dbReference>
<dbReference type="RefSeq" id="NP_001284409.1">
    <property type="nucleotide sequence ID" value="NM_001297480.1"/>
</dbReference>
<dbReference type="PDB" id="5ME5">
    <property type="method" value="X-ray"/>
    <property type="resolution" value="1.90 A"/>
    <property type="chains" value="A=2-235"/>
</dbReference>
<dbReference type="PDB" id="5ME6">
    <property type="method" value="X-ray"/>
    <property type="resolution" value="2.90 A"/>
    <property type="chains" value="A/B/C/D=53-235"/>
</dbReference>
<dbReference type="PDB" id="5ME7">
    <property type="method" value="X-ray"/>
    <property type="resolution" value="2.20 A"/>
    <property type="chains" value="A/B/C/D=53-235"/>
</dbReference>
<dbReference type="PDBsum" id="5ME5"/>
<dbReference type="PDBsum" id="5ME6"/>
<dbReference type="PDBsum" id="5ME7"/>
<dbReference type="SMR" id="P0DXI0"/>
<dbReference type="STRING" id="1194695.A0A5A7UUA1"/>
<dbReference type="GeneID" id="103487284"/>
<dbReference type="KEGG" id="cmo:103487284"/>
<dbReference type="InParanoid" id="Q00LS8"/>
<dbReference type="Proteomes" id="UP000089565">
    <property type="component" value="Unplaced"/>
</dbReference>
<dbReference type="Proteomes" id="UP000596662">
    <property type="component" value="Unplaced"/>
</dbReference>
<dbReference type="GO" id="GO:0005737">
    <property type="term" value="C:cytoplasm"/>
    <property type="evidence" value="ECO:0000250"/>
    <property type="project" value="UniProtKB"/>
</dbReference>
<dbReference type="GO" id="GO:0016281">
    <property type="term" value="C:eukaryotic translation initiation factor 4F complex"/>
    <property type="evidence" value="ECO:0007669"/>
    <property type="project" value="TreeGrafter"/>
</dbReference>
<dbReference type="GO" id="GO:0005634">
    <property type="term" value="C:nucleus"/>
    <property type="evidence" value="ECO:0000250"/>
    <property type="project" value="UniProtKB"/>
</dbReference>
<dbReference type="GO" id="GO:0000340">
    <property type="term" value="F:RNA 7-methylguanosine cap binding"/>
    <property type="evidence" value="ECO:0007669"/>
    <property type="project" value="TreeGrafter"/>
</dbReference>
<dbReference type="GO" id="GO:0003723">
    <property type="term" value="F:RNA binding"/>
    <property type="evidence" value="ECO:0000314"/>
    <property type="project" value="UniProtKB"/>
</dbReference>
<dbReference type="GO" id="GO:0003743">
    <property type="term" value="F:translation initiation factor activity"/>
    <property type="evidence" value="ECO:0000314"/>
    <property type="project" value="UniProtKB"/>
</dbReference>
<dbReference type="GO" id="GO:0051607">
    <property type="term" value="P:defense response to virus"/>
    <property type="evidence" value="ECO:0000315"/>
    <property type="project" value="UniProtKB"/>
</dbReference>
<dbReference type="GO" id="GO:0006417">
    <property type="term" value="P:regulation of translation"/>
    <property type="evidence" value="ECO:0007669"/>
    <property type="project" value="UniProtKB-KW"/>
</dbReference>
<dbReference type="GO" id="GO:0006413">
    <property type="term" value="P:translational initiation"/>
    <property type="evidence" value="ECO:0000314"/>
    <property type="project" value="UniProtKB"/>
</dbReference>
<dbReference type="FunFam" id="3.30.760.10:FF:000003">
    <property type="entry name" value="Eukaryotic translation initiation factor 4E"/>
    <property type="match status" value="1"/>
</dbReference>
<dbReference type="Gene3D" id="3.30.760.10">
    <property type="entry name" value="RNA Cap, Translation Initiation Factor Eif4e"/>
    <property type="match status" value="1"/>
</dbReference>
<dbReference type="InterPro" id="IPR023398">
    <property type="entry name" value="TIF_eIF4e-like"/>
</dbReference>
<dbReference type="InterPro" id="IPR001040">
    <property type="entry name" value="TIF_eIF_4E"/>
</dbReference>
<dbReference type="InterPro" id="IPR019770">
    <property type="entry name" value="TIF_eIF_4E_CS"/>
</dbReference>
<dbReference type="PANTHER" id="PTHR11960">
    <property type="entry name" value="EUKARYOTIC TRANSLATION INITIATION FACTOR 4E RELATED"/>
    <property type="match status" value="1"/>
</dbReference>
<dbReference type="PANTHER" id="PTHR11960:SF8">
    <property type="entry name" value="EUKARYOTIC TRANSLATION INITIATION FACTOR 4E1-RELATED"/>
    <property type="match status" value="1"/>
</dbReference>
<dbReference type="Pfam" id="PF01652">
    <property type="entry name" value="IF4E"/>
    <property type="match status" value="1"/>
</dbReference>
<dbReference type="SUPFAM" id="SSF55418">
    <property type="entry name" value="eIF4e-like"/>
    <property type="match status" value="1"/>
</dbReference>
<dbReference type="PROSITE" id="PS00813">
    <property type="entry name" value="IF4E"/>
    <property type="match status" value="1"/>
</dbReference>